<gene>
    <name type="ordered locus">At5g40670</name>
    <name type="ORF">MNF13.23</name>
</gene>
<feature type="chain" id="PRO_0000205518" description="Cystinosin homolog">
    <location>
        <begin position="1"/>
        <end position="270"/>
    </location>
</feature>
<feature type="transmembrane region" description="Helical" evidence="2">
    <location>
        <begin position="14"/>
        <end position="34"/>
    </location>
</feature>
<feature type="transmembrane region" description="Helical" evidence="2">
    <location>
        <begin position="93"/>
        <end position="113"/>
    </location>
</feature>
<feature type="transmembrane region" description="Helical" evidence="2">
    <location>
        <begin position="123"/>
        <end position="143"/>
    </location>
</feature>
<feature type="transmembrane region" description="Helical" evidence="2">
    <location>
        <begin position="148"/>
        <end position="168"/>
    </location>
</feature>
<feature type="transmembrane region" description="Helical" evidence="2">
    <location>
        <begin position="180"/>
        <end position="200"/>
    </location>
</feature>
<feature type="transmembrane region" description="Helical" evidence="2">
    <location>
        <begin position="223"/>
        <end position="243"/>
    </location>
</feature>
<feature type="domain" description="PQ-loop 1">
    <location>
        <begin position="9"/>
        <end position="75"/>
    </location>
</feature>
<feature type="domain" description="PQ-loop 2">
    <location>
        <begin position="151"/>
        <end position="213"/>
    </location>
</feature>
<feature type="region of interest" description="Disordered" evidence="3">
    <location>
        <begin position="250"/>
        <end position="270"/>
    </location>
</feature>
<feature type="glycosylation site" description="N-linked (GlcNAc...) asparagine" evidence="2">
    <location>
        <position position="52"/>
    </location>
</feature>
<feature type="glycosylation site" description="N-linked (GlcNAc...) asparagine" evidence="2">
    <location>
        <position position="174"/>
    </location>
</feature>
<feature type="helix" evidence="5">
    <location>
        <begin position="7"/>
        <end position="25"/>
    </location>
</feature>
<feature type="helix" evidence="5">
    <location>
        <begin position="26"/>
        <end position="28"/>
    </location>
</feature>
<feature type="helix" evidence="5">
    <location>
        <begin position="29"/>
        <end position="38"/>
    </location>
</feature>
<feature type="helix" evidence="5">
    <location>
        <begin position="46"/>
        <end position="68"/>
    </location>
</feature>
<feature type="helix" evidence="5">
    <location>
        <begin position="70"/>
        <end position="80"/>
    </location>
</feature>
<feature type="helix" evidence="5">
    <location>
        <begin position="90"/>
        <end position="112"/>
    </location>
</feature>
<feature type="helix" evidence="5">
    <location>
        <begin position="122"/>
        <end position="142"/>
    </location>
</feature>
<feature type="turn" evidence="5">
    <location>
        <begin position="143"/>
        <end position="146"/>
    </location>
</feature>
<feature type="helix" evidence="5">
    <location>
        <begin position="148"/>
        <end position="170"/>
    </location>
</feature>
<feature type="helix" evidence="5">
    <location>
        <begin position="185"/>
        <end position="209"/>
    </location>
</feature>
<feature type="helix" evidence="5">
    <location>
        <begin position="214"/>
        <end position="217"/>
    </location>
</feature>
<feature type="helix" evidence="5">
    <location>
        <begin position="219"/>
        <end position="240"/>
    </location>
</feature>
<dbReference type="EMBL" id="AB009052">
    <property type="protein sequence ID" value="BAB08539.1"/>
    <property type="molecule type" value="Genomic_DNA"/>
</dbReference>
<dbReference type="EMBL" id="CP002688">
    <property type="protein sequence ID" value="AED94580.1"/>
    <property type="molecule type" value="Genomic_DNA"/>
</dbReference>
<dbReference type="EMBL" id="AY052257">
    <property type="protein sequence ID" value="AAK97727.1"/>
    <property type="molecule type" value="mRNA"/>
</dbReference>
<dbReference type="EMBL" id="AY060522">
    <property type="protein sequence ID" value="AAL31135.1"/>
    <property type="molecule type" value="mRNA"/>
</dbReference>
<dbReference type="RefSeq" id="NP_198883.1">
    <property type="nucleotide sequence ID" value="NM_123432.4"/>
</dbReference>
<dbReference type="PDB" id="7ZK1">
    <property type="method" value="X-ray"/>
    <property type="resolution" value="2.65 A"/>
    <property type="chains" value="A=1-270"/>
</dbReference>
<dbReference type="PDB" id="7ZKW">
    <property type="method" value="X-ray"/>
    <property type="resolution" value="3.37 A"/>
    <property type="chains" value="A/B=1-270"/>
</dbReference>
<dbReference type="PDB" id="7ZKZ">
    <property type="method" value="X-ray"/>
    <property type="resolution" value="2.33 A"/>
    <property type="chains" value="A=1-270"/>
</dbReference>
<dbReference type="PDBsum" id="7ZK1"/>
<dbReference type="PDBsum" id="7ZKW"/>
<dbReference type="PDBsum" id="7ZKZ"/>
<dbReference type="SMR" id="P57758"/>
<dbReference type="BioGRID" id="19318">
    <property type="interactions" value="6"/>
</dbReference>
<dbReference type="FunCoup" id="P57758">
    <property type="interactions" value="2814"/>
</dbReference>
<dbReference type="IntAct" id="P57758">
    <property type="interactions" value="6"/>
</dbReference>
<dbReference type="STRING" id="3702.P57758"/>
<dbReference type="TCDB" id="2.A.43.1.4">
    <property type="family name" value="the lysosomal cystine transporter (lct) family"/>
</dbReference>
<dbReference type="GlyGen" id="P57758">
    <property type="glycosylation" value="2 sites"/>
</dbReference>
<dbReference type="PaxDb" id="3702-AT5G40670.1"/>
<dbReference type="ProteomicsDB" id="220317"/>
<dbReference type="EnsemblPlants" id="AT5G40670.1">
    <property type="protein sequence ID" value="AT5G40670.1"/>
    <property type="gene ID" value="AT5G40670"/>
</dbReference>
<dbReference type="GeneID" id="834067"/>
<dbReference type="Gramene" id="AT5G40670.1">
    <property type="protein sequence ID" value="AT5G40670.1"/>
    <property type="gene ID" value="AT5G40670"/>
</dbReference>
<dbReference type="KEGG" id="ath:AT5G40670"/>
<dbReference type="Araport" id="AT5G40670"/>
<dbReference type="TAIR" id="AT5G40670"/>
<dbReference type="eggNOG" id="KOG3145">
    <property type="taxonomic scope" value="Eukaryota"/>
</dbReference>
<dbReference type="HOGENOM" id="CLU_046327_0_0_1"/>
<dbReference type="InParanoid" id="P57758"/>
<dbReference type="OMA" id="WIDVIYT"/>
<dbReference type="OrthoDB" id="75720at2759"/>
<dbReference type="PhylomeDB" id="P57758"/>
<dbReference type="PRO" id="PR:P57758"/>
<dbReference type="Proteomes" id="UP000006548">
    <property type="component" value="Chromosome 5"/>
</dbReference>
<dbReference type="ExpressionAtlas" id="P57758">
    <property type="expression patterns" value="baseline and differential"/>
</dbReference>
<dbReference type="GO" id="GO:0005765">
    <property type="term" value="C:lysosomal membrane"/>
    <property type="evidence" value="ECO:0007669"/>
    <property type="project" value="UniProtKB-SubCell"/>
</dbReference>
<dbReference type="GO" id="GO:0000325">
    <property type="term" value="C:plant-type vacuole"/>
    <property type="evidence" value="ECO:0007005"/>
    <property type="project" value="TAIR"/>
</dbReference>
<dbReference type="GO" id="GO:0015179">
    <property type="term" value="F:L-amino acid transmembrane transporter activity"/>
    <property type="evidence" value="ECO:0007669"/>
    <property type="project" value="UniProtKB-ARBA"/>
</dbReference>
<dbReference type="GO" id="GO:0015811">
    <property type="term" value="P:L-cystine transport"/>
    <property type="evidence" value="ECO:0007669"/>
    <property type="project" value="UniProtKB-ARBA"/>
</dbReference>
<dbReference type="FunFam" id="1.20.1280.290:FF:000018">
    <property type="entry name" value="Cystinosin homolog"/>
    <property type="match status" value="1"/>
</dbReference>
<dbReference type="Gene3D" id="1.20.1280.290">
    <property type="match status" value="1"/>
</dbReference>
<dbReference type="InterPro" id="IPR005282">
    <property type="entry name" value="LC_transporter"/>
</dbReference>
<dbReference type="InterPro" id="IPR006603">
    <property type="entry name" value="PQ-loop_rpt"/>
</dbReference>
<dbReference type="NCBIfam" id="TIGR00951">
    <property type="entry name" value="2A43"/>
    <property type="match status" value="1"/>
</dbReference>
<dbReference type="PANTHER" id="PTHR13131">
    <property type="entry name" value="CYSTINOSIN"/>
    <property type="match status" value="1"/>
</dbReference>
<dbReference type="PANTHER" id="PTHR13131:SF5">
    <property type="entry name" value="CYSTINOSIN"/>
    <property type="match status" value="1"/>
</dbReference>
<dbReference type="Pfam" id="PF04193">
    <property type="entry name" value="PQ-loop"/>
    <property type="match status" value="2"/>
</dbReference>
<dbReference type="SMART" id="SM00679">
    <property type="entry name" value="CTNS"/>
    <property type="match status" value="2"/>
</dbReference>
<sequence>MASWNSIPLEISYEIVGWIAFASWSISFYPQLILNFRRRSVVGLNFDFVMLNLTKHSSYMIYNVCLYFSPVIQKQYFDTYGDKEMIPVAANDVAFSIHAVVMTAVTLFQIFIYERGPQKVSRLAIGIVVVVWGFAAICFFIALPTHSWLWLISIFNSIQVFMTCVKYIPQAKMNFTRKSTVGWSIGNILLDFTGGLANYLQMVIQSIDQNSWKNFYGNMGKTLLSLISIFFDILFMFQHYVLYPEKKVSKSPETGEESNEPLIDSSHEHV</sequence>
<protein>
    <recommendedName>
        <fullName>Cystinosin homolog</fullName>
    </recommendedName>
</protein>
<proteinExistence type="evidence at protein level"/>
<accession>P57758</accession>
<evidence type="ECO:0000250" key="1"/>
<evidence type="ECO:0000255" key="2"/>
<evidence type="ECO:0000256" key="3">
    <source>
        <dbReference type="SAM" id="MobiDB-lite"/>
    </source>
</evidence>
<evidence type="ECO:0000305" key="4"/>
<evidence type="ECO:0007829" key="5">
    <source>
        <dbReference type="PDB" id="7ZKZ"/>
    </source>
</evidence>
<keyword id="KW-0002">3D-structure</keyword>
<keyword id="KW-0325">Glycoprotein</keyword>
<keyword id="KW-0458">Lysosome</keyword>
<keyword id="KW-0472">Membrane</keyword>
<keyword id="KW-1185">Reference proteome</keyword>
<keyword id="KW-0677">Repeat</keyword>
<keyword id="KW-0812">Transmembrane</keyword>
<keyword id="KW-1133">Transmembrane helix</keyword>
<keyword id="KW-0813">Transport</keyword>
<comment type="function">
    <text evidence="1">Thought to transport cystine out of lysosomes.</text>
</comment>
<comment type="subcellular location">
    <subcellularLocation>
        <location evidence="1">Lysosome membrane</location>
        <topology evidence="1">Multi-pass membrane protein</topology>
    </subcellularLocation>
</comment>
<comment type="similarity">
    <text evidence="4">Belongs to the cystinosin (TC 2.A.43.1) family.</text>
</comment>
<organism>
    <name type="scientific">Arabidopsis thaliana</name>
    <name type="common">Mouse-ear cress</name>
    <dbReference type="NCBI Taxonomy" id="3702"/>
    <lineage>
        <taxon>Eukaryota</taxon>
        <taxon>Viridiplantae</taxon>
        <taxon>Streptophyta</taxon>
        <taxon>Embryophyta</taxon>
        <taxon>Tracheophyta</taxon>
        <taxon>Spermatophyta</taxon>
        <taxon>Magnoliopsida</taxon>
        <taxon>eudicotyledons</taxon>
        <taxon>Gunneridae</taxon>
        <taxon>Pentapetalae</taxon>
        <taxon>rosids</taxon>
        <taxon>malvids</taxon>
        <taxon>Brassicales</taxon>
        <taxon>Brassicaceae</taxon>
        <taxon>Camelineae</taxon>
        <taxon>Arabidopsis</taxon>
    </lineage>
</organism>
<name>CTNS_ARATH</name>
<reference key="1">
    <citation type="journal article" date="1998" name="DNA Res.">
        <title>Structural analysis of Arabidopsis thaliana chromosome 5. IV. Sequence features of the regions of 1,456,315 bp covered by nineteen physically assigned P1 and TAC clones.</title>
        <authorList>
            <person name="Sato S."/>
            <person name="Kaneko T."/>
            <person name="Kotani H."/>
            <person name="Nakamura Y."/>
            <person name="Asamizu E."/>
            <person name="Miyajima N."/>
            <person name="Tabata S."/>
        </authorList>
    </citation>
    <scope>NUCLEOTIDE SEQUENCE [LARGE SCALE GENOMIC DNA]</scope>
    <source>
        <strain>cv. Columbia</strain>
    </source>
</reference>
<reference key="2">
    <citation type="journal article" date="2017" name="Plant J.">
        <title>Araport11: a complete reannotation of the Arabidopsis thaliana reference genome.</title>
        <authorList>
            <person name="Cheng C.Y."/>
            <person name="Krishnakumar V."/>
            <person name="Chan A.P."/>
            <person name="Thibaud-Nissen F."/>
            <person name="Schobel S."/>
            <person name="Town C.D."/>
        </authorList>
    </citation>
    <scope>GENOME REANNOTATION</scope>
    <source>
        <strain>cv. Columbia</strain>
    </source>
</reference>
<reference key="3">
    <citation type="journal article" date="2003" name="Science">
        <title>Empirical analysis of transcriptional activity in the Arabidopsis genome.</title>
        <authorList>
            <person name="Yamada K."/>
            <person name="Lim J."/>
            <person name="Dale J.M."/>
            <person name="Chen H."/>
            <person name="Shinn P."/>
            <person name="Palm C.J."/>
            <person name="Southwick A.M."/>
            <person name="Wu H.C."/>
            <person name="Kim C.J."/>
            <person name="Nguyen M."/>
            <person name="Pham P.K."/>
            <person name="Cheuk R.F."/>
            <person name="Karlin-Newmann G."/>
            <person name="Liu S.X."/>
            <person name="Lam B."/>
            <person name="Sakano H."/>
            <person name="Wu T."/>
            <person name="Yu G."/>
            <person name="Miranda M."/>
            <person name="Quach H.L."/>
            <person name="Tripp M."/>
            <person name="Chang C.H."/>
            <person name="Lee J.M."/>
            <person name="Toriumi M.J."/>
            <person name="Chan M.M."/>
            <person name="Tang C.C."/>
            <person name="Onodera C.S."/>
            <person name="Deng J.M."/>
            <person name="Akiyama K."/>
            <person name="Ansari Y."/>
            <person name="Arakawa T."/>
            <person name="Banh J."/>
            <person name="Banno F."/>
            <person name="Bowser L."/>
            <person name="Brooks S.Y."/>
            <person name="Carninci P."/>
            <person name="Chao Q."/>
            <person name="Choy N."/>
            <person name="Enju A."/>
            <person name="Goldsmith A.D."/>
            <person name="Gurjal M."/>
            <person name="Hansen N.F."/>
            <person name="Hayashizaki Y."/>
            <person name="Johnson-Hopson C."/>
            <person name="Hsuan V.W."/>
            <person name="Iida K."/>
            <person name="Karnes M."/>
            <person name="Khan S."/>
            <person name="Koesema E."/>
            <person name="Ishida J."/>
            <person name="Jiang P.X."/>
            <person name="Jones T."/>
            <person name="Kawai J."/>
            <person name="Kamiya A."/>
            <person name="Meyers C."/>
            <person name="Nakajima M."/>
            <person name="Narusaka M."/>
            <person name="Seki M."/>
            <person name="Sakurai T."/>
            <person name="Satou M."/>
            <person name="Tamse R."/>
            <person name="Vaysberg M."/>
            <person name="Wallender E.K."/>
            <person name="Wong C."/>
            <person name="Yamamura Y."/>
            <person name="Yuan S."/>
            <person name="Shinozaki K."/>
            <person name="Davis R.W."/>
            <person name="Theologis A."/>
            <person name="Ecker J.R."/>
        </authorList>
    </citation>
    <scope>NUCLEOTIDE SEQUENCE [LARGE SCALE MRNA]</scope>
    <source>
        <strain>cv. Columbia</strain>
    </source>
</reference>